<comment type="function">
    <text evidence="2">Beta-mannosyltransferase involved in cell wall biosynthesis. Required for addition of the second beta-mannose residue to acid-stable fraction of cell wall phosphopeptidomannan, and in elongation of beta-mannose chains on the phosphopeptidomannan acid-labile fraction.</text>
</comment>
<comment type="subcellular location">
    <subcellularLocation>
        <location evidence="5">Membrane</location>
        <topology evidence="5">Single-pass type II membrane protein</topology>
    </subcellularLocation>
</comment>
<comment type="induction">
    <text evidence="3 4">Expression is induced in biofilm and by HAP43.</text>
</comment>
<comment type="disruption phenotype">
    <text evidence="2">Impairs the elongation of beta-mannose chains on the acid-labile fraction of cell wall phosphopeptidomannan.</text>
</comment>
<comment type="similarity">
    <text evidence="5">Belongs to the BMT family.</text>
</comment>
<accession>Q5A846</accession>
<accession>A0A1D8PRU1</accession>
<reference key="1">
    <citation type="journal article" date="2004" name="Proc. Natl. Acad. Sci. U.S.A.">
        <title>The diploid genome sequence of Candida albicans.</title>
        <authorList>
            <person name="Jones T."/>
            <person name="Federspiel N.A."/>
            <person name="Chibana H."/>
            <person name="Dungan J."/>
            <person name="Kalman S."/>
            <person name="Magee B.B."/>
            <person name="Newport G."/>
            <person name="Thorstenson Y.R."/>
            <person name="Agabian N."/>
            <person name="Magee P.T."/>
            <person name="Davis R.W."/>
            <person name="Scherer S."/>
        </authorList>
    </citation>
    <scope>NUCLEOTIDE SEQUENCE [LARGE SCALE GENOMIC DNA]</scope>
    <source>
        <strain>SC5314 / ATCC MYA-2876</strain>
    </source>
</reference>
<reference key="2">
    <citation type="journal article" date="2007" name="Genome Biol.">
        <title>Assembly of the Candida albicans genome into sixteen supercontigs aligned on the eight chromosomes.</title>
        <authorList>
            <person name="van het Hoog M."/>
            <person name="Rast T.J."/>
            <person name="Martchenko M."/>
            <person name="Grindle S."/>
            <person name="Dignard D."/>
            <person name="Hogues H."/>
            <person name="Cuomo C."/>
            <person name="Berriman M."/>
            <person name="Scherer S."/>
            <person name="Magee B.B."/>
            <person name="Whiteway M."/>
            <person name="Chibana H."/>
            <person name="Nantel A."/>
            <person name="Magee P.T."/>
        </authorList>
    </citation>
    <scope>GENOME REANNOTATION</scope>
    <source>
        <strain>SC5314 / ATCC MYA-2876</strain>
    </source>
</reference>
<reference key="3">
    <citation type="journal article" date="2013" name="Genome Biol.">
        <title>Assembly of a phased diploid Candida albicans genome facilitates allele-specific measurements and provides a simple model for repeat and indel structure.</title>
        <authorList>
            <person name="Muzzey D."/>
            <person name="Schwartz K."/>
            <person name="Weissman J.S."/>
            <person name="Sherlock G."/>
        </authorList>
    </citation>
    <scope>NUCLEOTIDE SEQUENCE [LARGE SCALE GENOMIC DNA]</scope>
    <scope>GENOME REANNOTATION</scope>
    <source>
        <strain>SC5314 / ATCC MYA-2876</strain>
    </source>
</reference>
<reference key="4">
    <citation type="journal article" date="2008" name="J. Biol. Chem.">
        <title>Identification of a new family of genes involved in beta-1,2-mannosylation of glycans in Pichia pastoris and Candida albicans.</title>
        <authorList>
            <person name="Mille C."/>
            <person name="Bobrowicz P."/>
            <person name="Trinel P.A."/>
            <person name="Li H."/>
            <person name="Maes E."/>
            <person name="Guerardel Y."/>
            <person name="Fradin C."/>
            <person name="Martinez-Esparza M."/>
            <person name="Davidson R.C."/>
            <person name="Janbon G."/>
            <person name="Poulain D."/>
            <person name="Wildt S."/>
        </authorList>
    </citation>
    <scope>IDENTIFICATION</scope>
    <scope>DISRUPTION PHENOTYPE</scope>
    <scope>FUNCTION</scope>
</reference>
<reference key="5">
    <citation type="journal article" date="2011" name="J. Biol. Chem.">
        <title>Cap2-HAP complex is a critical transcriptional regulator that has dual but contrasting roles in regulation of iron homeostasis in Candida albicans.</title>
        <authorList>
            <person name="Singh R.P."/>
            <person name="Prasad H.K."/>
            <person name="Sinha I."/>
            <person name="Agarwal N."/>
            <person name="Natarajan K."/>
        </authorList>
    </citation>
    <scope>INDUCTION</scope>
</reference>
<reference key="6">
    <citation type="journal article" date="2012" name="Cell">
        <title>A recently evolved transcriptional network controls biofilm development in Candida albicans.</title>
        <authorList>
            <person name="Nobile C.J."/>
            <person name="Fox E.P."/>
            <person name="Nett J.E."/>
            <person name="Sorrells T.R."/>
            <person name="Mitrovich Q.M."/>
            <person name="Hernday A.D."/>
            <person name="Tuch B.B."/>
            <person name="Andes D.R."/>
            <person name="Johnson A.D."/>
        </authorList>
    </citation>
    <scope>INDUCTION</scope>
</reference>
<dbReference type="EC" id="2.4.1.-"/>
<dbReference type="EMBL" id="CP017630">
    <property type="protein sequence ID" value="AOW30841.1"/>
    <property type="molecule type" value="Genomic_DNA"/>
</dbReference>
<dbReference type="RefSeq" id="XP_717972.1">
    <property type="nucleotide sequence ID" value="XM_712879.1"/>
</dbReference>
<dbReference type="STRING" id="237561.Q5A846"/>
<dbReference type="CAZy" id="GT91">
    <property type="family name" value="Glycosyltransferase Family 91"/>
</dbReference>
<dbReference type="EnsemblFungi" id="CR_00740C_A-T">
    <property type="protein sequence ID" value="CR_00740C_A-T-p1"/>
    <property type="gene ID" value="CR_00740C_A"/>
</dbReference>
<dbReference type="GeneID" id="3640439"/>
<dbReference type="KEGG" id="cal:CAALFM_CR00740CA"/>
<dbReference type="CGD" id="CAL0000192226">
    <property type="gene designation" value="BMT3"/>
</dbReference>
<dbReference type="VEuPathDB" id="FungiDB:CR_00740C_A"/>
<dbReference type="HOGENOM" id="CLU_013841_3_0_1"/>
<dbReference type="InParanoid" id="Q5A846"/>
<dbReference type="OMA" id="RAMHIYR"/>
<dbReference type="OrthoDB" id="3631276at2759"/>
<dbReference type="PRO" id="PR:Q5A846"/>
<dbReference type="Proteomes" id="UP000000559">
    <property type="component" value="Chromosome R"/>
</dbReference>
<dbReference type="GO" id="GO:0016020">
    <property type="term" value="C:membrane"/>
    <property type="evidence" value="ECO:0007669"/>
    <property type="project" value="UniProtKB-SubCell"/>
</dbReference>
<dbReference type="GO" id="GO:0000030">
    <property type="term" value="F:mannosyltransferase activity"/>
    <property type="evidence" value="ECO:0000314"/>
    <property type="project" value="CGD"/>
</dbReference>
<dbReference type="GO" id="GO:0070136">
    <property type="term" value="P:beta-1,2-oligomannoside biosynthetic process"/>
    <property type="evidence" value="ECO:0000314"/>
    <property type="project" value="CGD"/>
</dbReference>
<dbReference type="GO" id="GO:0070135">
    <property type="term" value="P:beta-1,2-oligomannoside metabolic process"/>
    <property type="evidence" value="ECO:0000315"/>
    <property type="project" value="CGD"/>
</dbReference>
<dbReference type="GO" id="GO:0071555">
    <property type="term" value="P:cell wall organization"/>
    <property type="evidence" value="ECO:0007669"/>
    <property type="project" value="UniProtKB-KW"/>
</dbReference>
<dbReference type="GO" id="GO:0035269">
    <property type="term" value="P:protein O-linked mannosylation"/>
    <property type="evidence" value="ECO:0000315"/>
    <property type="project" value="CGD"/>
</dbReference>
<dbReference type="InterPro" id="IPR021988">
    <property type="entry name" value="BMT1"/>
</dbReference>
<dbReference type="Pfam" id="PF12141">
    <property type="entry name" value="BMT"/>
    <property type="match status" value="2"/>
</dbReference>
<proteinExistence type="evidence at transcript level"/>
<organism>
    <name type="scientific">Candida albicans (strain SC5314 / ATCC MYA-2876)</name>
    <name type="common">Yeast</name>
    <dbReference type="NCBI Taxonomy" id="237561"/>
    <lineage>
        <taxon>Eukaryota</taxon>
        <taxon>Fungi</taxon>
        <taxon>Dikarya</taxon>
        <taxon>Ascomycota</taxon>
        <taxon>Saccharomycotina</taxon>
        <taxon>Pichiomycetes</taxon>
        <taxon>Debaryomycetaceae</taxon>
        <taxon>Candida/Lodderomyces clade</taxon>
        <taxon>Candida</taxon>
    </lineage>
</organism>
<evidence type="ECO:0000255" key="1"/>
<evidence type="ECO:0000269" key="2">
    <source>
    </source>
</evidence>
<evidence type="ECO:0000269" key="3">
    <source>
    </source>
</evidence>
<evidence type="ECO:0000269" key="4">
    <source>
    </source>
</evidence>
<evidence type="ECO:0000305" key="5"/>
<keyword id="KW-0961">Cell wall biogenesis/degradation</keyword>
<keyword id="KW-0328">Glycosyltransferase</keyword>
<keyword id="KW-0472">Membrane</keyword>
<keyword id="KW-1185">Reference proteome</keyword>
<keyword id="KW-0735">Signal-anchor</keyword>
<keyword id="KW-0808">Transferase</keyword>
<keyword id="KW-0812">Transmembrane</keyword>
<keyword id="KW-1133">Transmembrane helix</keyword>
<feature type="chain" id="PRO_0000426071" description="Beta-mannosyltransferase 3">
    <location>
        <begin position="1"/>
        <end position="549"/>
    </location>
</feature>
<feature type="topological domain" description="Cytoplasmic" evidence="1">
    <location>
        <begin position="1"/>
        <end position="37"/>
    </location>
</feature>
<feature type="transmembrane region" description="Helical" evidence="1">
    <location>
        <begin position="38"/>
        <end position="58"/>
    </location>
</feature>
<feature type="topological domain" description="Extracellular" evidence="1">
    <location>
        <begin position="59"/>
        <end position="549"/>
    </location>
</feature>
<name>BMT3_CANAL</name>
<gene>
    <name type="primary">BMT3</name>
    <name type="synonym">WRY9</name>
    <name type="ordered locus">CAALFM_CR00740CA</name>
    <name type="ORF">CaO19.10792</name>
    <name type="ORF">CaO19.3282</name>
</gene>
<protein>
    <recommendedName>
        <fullName>Beta-mannosyltransferase 3</fullName>
        <ecNumber>2.4.1.-</ecNumber>
    </recommendedName>
    <alternativeName>
        <fullName>WRY family protein 9</fullName>
    </alternativeName>
</protein>
<sequence length="549" mass="62926">MFESDLSFYSALLILCCPISIVFFKKFPIKGYTGANKVSLFLQCLIAILNLNILYSFINSLTITLGHDGSSANTLTIDPITTTQQQGHVDYTPIKVSGYTFKNQVATKNLQCDSIVYDQDLDLQVSQAVDLNKPEDLKFFRDKLNELRSLNNIYDLFFQDNEDEVEESILERKWYKFCGSAVWLDKYGVYFMVNRIAYSKKGTRNNPTISVLAGQVFDKNWIELTGKKFPFSGLEFPTILPHYIDEGKEAEKVILGAEDPRVILHEYTNENGIRIQEPLIAFNALSTEVDWKRAMHIYRPLHDPHRIIRLSIENYAPREKEKNWAPFIDGNNLNFVYNFPLRILRCNINNGDCQKVSGPDFNDKSHENAGKLRGGTNLVEIPSQSLPKHLRSRKYWFGIARSHITDCGCVGELYRPHLILISRNKKSDQYELNYVSDLIDFNVNPEPWTPGKTTCSDGKSVLIPNSVAFIKDDYMSVTFSEADKTNKLINAKGWLTYITKMLEFTQERLKDESSDPVLESRLLSKCSTFLAQQYCALSKDTMGWDKLSR</sequence>